<feature type="chain" id="PRO_0000121873" description="tRNA pseudouridine synthase B">
    <location>
        <begin position="1"/>
        <end position="306"/>
    </location>
</feature>
<feature type="active site" description="Nucleophile" evidence="1">
    <location>
        <position position="47"/>
    </location>
</feature>
<name>TRUB_NEIG1</name>
<keyword id="KW-0413">Isomerase</keyword>
<keyword id="KW-1185">Reference proteome</keyword>
<keyword id="KW-0819">tRNA processing</keyword>
<sequence length="306" mass="33387">MTNKPAKRPVNGVLLLDKPEGLSSNTALQKARRLFHAEKAGHTGVLDPLATGLLPVCFGEAAKFAQYLLDADKAYTATLKLGEASSTGDAEGEIIAAARADISLAEFQTACQALTGNIRQVPPMFSALKHEGKPLYEYARKGIVIERKPRDITVYSIDIAEFDAPKAVISVRCSKGTYIRTLSEGIAKHIGTFAHLTALRRTETAGFTIAQSHTLEALANLNETERDGLLLPCDVLVSHFPQTVLNDYAVHMLQCGQRPRFEEDLPSDTPVRVYTENGRFVGLAEYQKEICRMKALRLMNTAASSA</sequence>
<protein>
    <recommendedName>
        <fullName evidence="1">tRNA pseudouridine synthase B</fullName>
        <ecNumber evidence="1">5.4.99.25</ecNumber>
    </recommendedName>
    <alternativeName>
        <fullName evidence="1">tRNA pseudouridine(55) synthase</fullName>
        <shortName evidence="1">Psi55 synthase</shortName>
    </alternativeName>
    <alternativeName>
        <fullName evidence="1">tRNA pseudouridylate synthase</fullName>
    </alternativeName>
    <alternativeName>
        <fullName evidence="1">tRNA-uridine isomerase</fullName>
    </alternativeName>
</protein>
<gene>
    <name evidence="1" type="primary">truB</name>
    <name type="ordered locus">NGO_0642</name>
</gene>
<evidence type="ECO:0000255" key="1">
    <source>
        <dbReference type="HAMAP-Rule" id="MF_01080"/>
    </source>
</evidence>
<organism>
    <name type="scientific">Neisseria gonorrhoeae (strain ATCC 700825 / FA 1090)</name>
    <dbReference type="NCBI Taxonomy" id="242231"/>
    <lineage>
        <taxon>Bacteria</taxon>
        <taxon>Pseudomonadati</taxon>
        <taxon>Pseudomonadota</taxon>
        <taxon>Betaproteobacteria</taxon>
        <taxon>Neisseriales</taxon>
        <taxon>Neisseriaceae</taxon>
        <taxon>Neisseria</taxon>
    </lineage>
</organism>
<proteinExistence type="inferred from homology"/>
<reference key="1">
    <citation type="submission" date="2003-03" db="EMBL/GenBank/DDBJ databases">
        <title>The complete genome sequence of Neisseria gonorrhoeae.</title>
        <authorList>
            <person name="Lewis L.A."/>
            <person name="Gillaspy A.F."/>
            <person name="McLaughlin R.E."/>
            <person name="Gipson M."/>
            <person name="Ducey T.F."/>
            <person name="Ownbey T."/>
            <person name="Hartman K."/>
            <person name="Nydick C."/>
            <person name="Carson M.B."/>
            <person name="Vaughn J."/>
            <person name="Thomson C."/>
            <person name="Song L."/>
            <person name="Lin S."/>
            <person name="Yuan X."/>
            <person name="Najar F."/>
            <person name="Zhan M."/>
            <person name="Ren Q."/>
            <person name="Zhu H."/>
            <person name="Qi S."/>
            <person name="Kenton S.M."/>
            <person name="Lai H."/>
            <person name="White J.D."/>
            <person name="Clifton S."/>
            <person name="Roe B.A."/>
            <person name="Dyer D.W."/>
        </authorList>
    </citation>
    <scope>NUCLEOTIDE SEQUENCE [LARGE SCALE GENOMIC DNA]</scope>
    <source>
        <strain>ATCC 700825 / FA 1090</strain>
    </source>
</reference>
<accession>Q5F8W8</accession>
<comment type="function">
    <text evidence="1">Responsible for synthesis of pseudouridine from uracil-55 in the psi GC loop of transfer RNAs.</text>
</comment>
<comment type="catalytic activity">
    <reaction evidence="1">
        <text>uridine(55) in tRNA = pseudouridine(55) in tRNA</text>
        <dbReference type="Rhea" id="RHEA:42532"/>
        <dbReference type="Rhea" id="RHEA-COMP:10101"/>
        <dbReference type="Rhea" id="RHEA-COMP:10102"/>
        <dbReference type="ChEBI" id="CHEBI:65314"/>
        <dbReference type="ChEBI" id="CHEBI:65315"/>
        <dbReference type="EC" id="5.4.99.25"/>
    </reaction>
</comment>
<comment type="similarity">
    <text evidence="1">Belongs to the pseudouridine synthase TruB family. Type 1 subfamily.</text>
</comment>
<dbReference type="EC" id="5.4.99.25" evidence="1"/>
<dbReference type="EMBL" id="AE004969">
    <property type="protein sequence ID" value="AAW89369.1"/>
    <property type="molecule type" value="Genomic_DNA"/>
</dbReference>
<dbReference type="RefSeq" id="WP_003697163.1">
    <property type="nucleotide sequence ID" value="NC_002946.2"/>
</dbReference>
<dbReference type="RefSeq" id="YP_207781.1">
    <property type="nucleotide sequence ID" value="NC_002946.2"/>
</dbReference>
<dbReference type="SMR" id="Q5F8W8"/>
<dbReference type="STRING" id="242231.NGO_0642"/>
<dbReference type="KEGG" id="ngo:NGO_0642"/>
<dbReference type="PATRIC" id="fig|242231.10.peg.756"/>
<dbReference type="HOGENOM" id="CLU_032087_0_3_4"/>
<dbReference type="Proteomes" id="UP000000535">
    <property type="component" value="Chromosome"/>
</dbReference>
<dbReference type="GO" id="GO:0003723">
    <property type="term" value="F:RNA binding"/>
    <property type="evidence" value="ECO:0007669"/>
    <property type="project" value="InterPro"/>
</dbReference>
<dbReference type="GO" id="GO:0160148">
    <property type="term" value="F:tRNA pseudouridine(55) synthase activity"/>
    <property type="evidence" value="ECO:0007669"/>
    <property type="project" value="UniProtKB-EC"/>
</dbReference>
<dbReference type="GO" id="GO:1990481">
    <property type="term" value="P:mRNA pseudouridine synthesis"/>
    <property type="evidence" value="ECO:0007669"/>
    <property type="project" value="TreeGrafter"/>
</dbReference>
<dbReference type="GO" id="GO:0031119">
    <property type="term" value="P:tRNA pseudouridine synthesis"/>
    <property type="evidence" value="ECO:0007669"/>
    <property type="project" value="UniProtKB-UniRule"/>
</dbReference>
<dbReference type="CDD" id="cd02573">
    <property type="entry name" value="PseudoU_synth_EcTruB"/>
    <property type="match status" value="1"/>
</dbReference>
<dbReference type="CDD" id="cd21152">
    <property type="entry name" value="PUA_TruB_bacterial"/>
    <property type="match status" value="1"/>
</dbReference>
<dbReference type="FunFam" id="3.30.2350.10:FF:000011">
    <property type="entry name" value="tRNA pseudouridine synthase B"/>
    <property type="match status" value="1"/>
</dbReference>
<dbReference type="Gene3D" id="3.30.2350.10">
    <property type="entry name" value="Pseudouridine synthase"/>
    <property type="match status" value="1"/>
</dbReference>
<dbReference type="Gene3D" id="2.30.130.10">
    <property type="entry name" value="PUA domain"/>
    <property type="match status" value="1"/>
</dbReference>
<dbReference type="HAMAP" id="MF_01080">
    <property type="entry name" value="TruB_bact"/>
    <property type="match status" value="1"/>
</dbReference>
<dbReference type="InterPro" id="IPR020103">
    <property type="entry name" value="PsdUridine_synth_cat_dom_sf"/>
</dbReference>
<dbReference type="InterPro" id="IPR002501">
    <property type="entry name" value="PsdUridine_synth_N"/>
</dbReference>
<dbReference type="InterPro" id="IPR015947">
    <property type="entry name" value="PUA-like_sf"/>
</dbReference>
<dbReference type="InterPro" id="IPR036974">
    <property type="entry name" value="PUA_sf"/>
</dbReference>
<dbReference type="InterPro" id="IPR014780">
    <property type="entry name" value="tRNA_psdUridine_synth_TruB"/>
</dbReference>
<dbReference type="InterPro" id="IPR015240">
    <property type="entry name" value="tRNA_sdUridine_synth_fam1_C"/>
</dbReference>
<dbReference type="InterPro" id="IPR032819">
    <property type="entry name" value="TruB_C"/>
</dbReference>
<dbReference type="NCBIfam" id="TIGR00431">
    <property type="entry name" value="TruB"/>
    <property type="match status" value="1"/>
</dbReference>
<dbReference type="PANTHER" id="PTHR13767:SF2">
    <property type="entry name" value="PSEUDOURIDYLATE SYNTHASE TRUB1"/>
    <property type="match status" value="1"/>
</dbReference>
<dbReference type="PANTHER" id="PTHR13767">
    <property type="entry name" value="TRNA-PSEUDOURIDINE SYNTHASE"/>
    <property type="match status" value="1"/>
</dbReference>
<dbReference type="Pfam" id="PF09157">
    <property type="entry name" value="TruB-C_2"/>
    <property type="match status" value="1"/>
</dbReference>
<dbReference type="Pfam" id="PF16198">
    <property type="entry name" value="TruB_C_2"/>
    <property type="match status" value="1"/>
</dbReference>
<dbReference type="Pfam" id="PF01509">
    <property type="entry name" value="TruB_N"/>
    <property type="match status" value="1"/>
</dbReference>
<dbReference type="SUPFAM" id="SSF55120">
    <property type="entry name" value="Pseudouridine synthase"/>
    <property type="match status" value="1"/>
</dbReference>
<dbReference type="SUPFAM" id="SSF88697">
    <property type="entry name" value="PUA domain-like"/>
    <property type="match status" value="1"/>
</dbReference>